<proteinExistence type="evidence at protein level"/>
<name>LY65C_HUMAN</name>
<comment type="function">
    <text>May have a role in hematopoietic cell differentiation.</text>
</comment>
<comment type="subunit">
    <text evidence="4">Forms oligomers.</text>
</comment>
<comment type="subcellular location">
    <subcellularLocation>
        <location evidence="6">Secreted</location>
    </subcellularLocation>
</comment>
<comment type="alternative products">
    <event type="alternative splicing"/>
    <isoform>
        <id>Q5SRR4-1</id>
        <name>1</name>
        <sequence type="displayed"/>
    </isoform>
    <isoform>
        <id>Q5SRR4-2</id>
        <name>2</name>
        <sequence type="described" ref="VSP_032004"/>
    </isoform>
    <isoform>
        <id>Q5SRR4-3</id>
        <name>3</name>
        <sequence type="described" ref="VSP_042107"/>
    </isoform>
</comment>
<comment type="tissue specificity">
    <text evidence="3">Detected in T-cell lines and fetal and adult lung.</text>
</comment>
<comment type="PTM">
    <text evidence="4">N-glycosylated.</text>
</comment>
<comment type="caution">
    <text evidence="6">It is uncertain whether Met-1 or Met-4 is the initiator.</text>
</comment>
<reference key="1">
    <citation type="journal article" date="2002" name="Genomics">
        <title>Transcriptional analysis of a novel cluster of LY-6 family members in the human and mouse major histocompatibility complex: five genes with many splice forms.</title>
        <authorList>
            <person name="Mallya M."/>
            <person name="Campbell R.D."/>
            <person name="Aguado B."/>
        </authorList>
    </citation>
    <scope>NUCLEOTIDE SEQUENCE [MRNA] (ISOFORM 1)</scope>
    <scope>NUCLEOTIDE SEQUENCE [MRNA] OF 6-229 (ISOFORM 3)</scope>
    <scope>TISSUE SPECIFICITY</scope>
</reference>
<reference key="2">
    <citation type="journal article" date="2003" name="Genome Res.">
        <title>Analysis of the gene-dense major histocompatibility complex class III region and its comparison to mouse.</title>
        <authorList>
            <person name="Xie T."/>
            <person name="Rowen L."/>
            <person name="Aguado B."/>
            <person name="Ahearn M.E."/>
            <person name="Madan A."/>
            <person name="Qin S."/>
            <person name="Campbell R.D."/>
            <person name="Hood L."/>
        </authorList>
    </citation>
    <scope>NUCLEOTIDE SEQUENCE [LARGE SCALE GENOMIC DNA] (ISOFORM 2)</scope>
</reference>
<reference key="3">
    <citation type="submission" date="2004-12" db="EMBL/GenBank/DDBJ databases">
        <title>Homo sapiens 2,229,817bp genomic DNA of 6p21.3 HLA class I region.</title>
        <authorList>
            <person name="Shiina S."/>
            <person name="Tamiya G."/>
            <person name="Oka A."/>
            <person name="Inoko H."/>
        </authorList>
    </citation>
    <scope>NUCLEOTIDE SEQUENCE [LARGE SCALE GENOMIC DNA] (ISOFORM 2)</scope>
</reference>
<reference key="4">
    <citation type="journal article" date="2003" name="Nature">
        <title>The DNA sequence and analysis of human chromosome 6.</title>
        <authorList>
            <person name="Mungall A.J."/>
            <person name="Palmer S.A."/>
            <person name="Sims S.K."/>
            <person name="Edwards C.A."/>
            <person name="Ashurst J.L."/>
            <person name="Wilming L."/>
            <person name="Jones M.C."/>
            <person name="Horton R."/>
            <person name="Hunt S.E."/>
            <person name="Scott C.E."/>
            <person name="Gilbert J.G.R."/>
            <person name="Clamp M.E."/>
            <person name="Bethel G."/>
            <person name="Milne S."/>
            <person name="Ainscough R."/>
            <person name="Almeida J.P."/>
            <person name="Ambrose K.D."/>
            <person name="Andrews T.D."/>
            <person name="Ashwell R.I.S."/>
            <person name="Babbage A.K."/>
            <person name="Bagguley C.L."/>
            <person name="Bailey J."/>
            <person name="Banerjee R."/>
            <person name="Barker D.J."/>
            <person name="Barlow K.F."/>
            <person name="Bates K."/>
            <person name="Beare D.M."/>
            <person name="Beasley H."/>
            <person name="Beasley O."/>
            <person name="Bird C.P."/>
            <person name="Blakey S.E."/>
            <person name="Bray-Allen S."/>
            <person name="Brook J."/>
            <person name="Brown A.J."/>
            <person name="Brown J.Y."/>
            <person name="Burford D.C."/>
            <person name="Burrill W."/>
            <person name="Burton J."/>
            <person name="Carder C."/>
            <person name="Carter N.P."/>
            <person name="Chapman J.C."/>
            <person name="Clark S.Y."/>
            <person name="Clark G."/>
            <person name="Clee C.M."/>
            <person name="Clegg S."/>
            <person name="Cobley V."/>
            <person name="Collier R.E."/>
            <person name="Collins J.E."/>
            <person name="Colman L.K."/>
            <person name="Corby N.R."/>
            <person name="Coville G.J."/>
            <person name="Culley K.M."/>
            <person name="Dhami P."/>
            <person name="Davies J."/>
            <person name="Dunn M."/>
            <person name="Earthrowl M.E."/>
            <person name="Ellington A.E."/>
            <person name="Evans K.A."/>
            <person name="Faulkner L."/>
            <person name="Francis M.D."/>
            <person name="Frankish A."/>
            <person name="Frankland J."/>
            <person name="French L."/>
            <person name="Garner P."/>
            <person name="Garnett J."/>
            <person name="Ghori M.J."/>
            <person name="Gilby L.M."/>
            <person name="Gillson C.J."/>
            <person name="Glithero R.J."/>
            <person name="Grafham D.V."/>
            <person name="Grant M."/>
            <person name="Gribble S."/>
            <person name="Griffiths C."/>
            <person name="Griffiths M.N.D."/>
            <person name="Hall R."/>
            <person name="Halls K.S."/>
            <person name="Hammond S."/>
            <person name="Harley J.L."/>
            <person name="Hart E.A."/>
            <person name="Heath P.D."/>
            <person name="Heathcott R."/>
            <person name="Holmes S.J."/>
            <person name="Howden P.J."/>
            <person name="Howe K.L."/>
            <person name="Howell G.R."/>
            <person name="Huckle E."/>
            <person name="Humphray S.J."/>
            <person name="Humphries M.D."/>
            <person name="Hunt A.R."/>
            <person name="Johnson C.M."/>
            <person name="Joy A.A."/>
            <person name="Kay M."/>
            <person name="Keenan S.J."/>
            <person name="Kimberley A.M."/>
            <person name="King A."/>
            <person name="Laird G.K."/>
            <person name="Langford C."/>
            <person name="Lawlor S."/>
            <person name="Leongamornlert D.A."/>
            <person name="Leversha M."/>
            <person name="Lloyd C.R."/>
            <person name="Lloyd D.M."/>
            <person name="Loveland J.E."/>
            <person name="Lovell J."/>
            <person name="Martin S."/>
            <person name="Mashreghi-Mohammadi M."/>
            <person name="Maslen G.L."/>
            <person name="Matthews L."/>
            <person name="McCann O.T."/>
            <person name="McLaren S.J."/>
            <person name="McLay K."/>
            <person name="McMurray A."/>
            <person name="Moore M.J.F."/>
            <person name="Mullikin J.C."/>
            <person name="Niblett D."/>
            <person name="Nickerson T."/>
            <person name="Novik K.L."/>
            <person name="Oliver K."/>
            <person name="Overton-Larty E.K."/>
            <person name="Parker A."/>
            <person name="Patel R."/>
            <person name="Pearce A.V."/>
            <person name="Peck A.I."/>
            <person name="Phillimore B.J.C.T."/>
            <person name="Phillips S."/>
            <person name="Plumb R.W."/>
            <person name="Porter K.M."/>
            <person name="Ramsey Y."/>
            <person name="Ranby S.A."/>
            <person name="Rice C.M."/>
            <person name="Ross M.T."/>
            <person name="Searle S.M."/>
            <person name="Sehra H.K."/>
            <person name="Sheridan E."/>
            <person name="Skuce C.D."/>
            <person name="Smith S."/>
            <person name="Smith M."/>
            <person name="Spraggon L."/>
            <person name="Squares S.L."/>
            <person name="Steward C.A."/>
            <person name="Sycamore N."/>
            <person name="Tamlyn-Hall G."/>
            <person name="Tester J."/>
            <person name="Theaker A.J."/>
            <person name="Thomas D.W."/>
            <person name="Thorpe A."/>
            <person name="Tracey A."/>
            <person name="Tromans A."/>
            <person name="Tubby B."/>
            <person name="Wall M."/>
            <person name="Wallis J.M."/>
            <person name="West A.P."/>
            <person name="White S.S."/>
            <person name="Whitehead S.L."/>
            <person name="Whittaker H."/>
            <person name="Wild A."/>
            <person name="Willey D.J."/>
            <person name="Wilmer T.E."/>
            <person name="Wood J.M."/>
            <person name="Wray P.W."/>
            <person name="Wyatt J.C."/>
            <person name="Young L."/>
            <person name="Younger R.M."/>
            <person name="Bentley D.R."/>
            <person name="Coulson A."/>
            <person name="Durbin R.M."/>
            <person name="Hubbard T."/>
            <person name="Sulston J.E."/>
            <person name="Dunham I."/>
            <person name="Rogers J."/>
            <person name="Beck S."/>
        </authorList>
    </citation>
    <scope>NUCLEOTIDE SEQUENCE [LARGE SCALE GENOMIC DNA]</scope>
</reference>
<reference key="5">
    <citation type="submission" date="2005-07" db="EMBL/GenBank/DDBJ databases">
        <authorList>
            <person name="Mural R.J."/>
            <person name="Istrail S."/>
            <person name="Sutton G.G."/>
            <person name="Florea L."/>
            <person name="Halpern A.L."/>
            <person name="Mobarry C.M."/>
            <person name="Lippert R."/>
            <person name="Walenz B."/>
            <person name="Shatkay H."/>
            <person name="Dew I."/>
            <person name="Miller J.R."/>
            <person name="Flanigan M.J."/>
            <person name="Edwards N.J."/>
            <person name="Bolanos R."/>
            <person name="Fasulo D."/>
            <person name="Halldorsson B.V."/>
            <person name="Hannenhalli S."/>
            <person name="Turner R."/>
            <person name="Yooseph S."/>
            <person name="Lu F."/>
            <person name="Nusskern D.R."/>
            <person name="Shue B.C."/>
            <person name="Zheng X.H."/>
            <person name="Zhong F."/>
            <person name="Delcher A.L."/>
            <person name="Huson D.H."/>
            <person name="Kravitz S.A."/>
            <person name="Mouchard L."/>
            <person name="Reinert K."/>
            <person name="Remington K.A."/>
            <person name="Clark A.G."/>
            <person name="Waterman M.S."/>
            <person name="Eichler E.E."/>
            <person name="Adams M.D."/>
            <person name="Hunkapiller M.W."/>
            <person name="Myers E.W."/>
            <person name="Venter J.C."/>
        </authorList>
    </citation>
    <scope>NUCLEOTIDE SEQUENCE [LARGE SCALE GENOMIC DNA]</scope>
</reference>
<reference key="6">
    <citation type="journal article" date="2006" name="Protein Sci.">
        <title>Characterization of the five novel Ly-6 superfamily members encoded in the MHC, and detection of cells expressing their potential ligands.</title>
        <authorList>
            <person name="Mallya M."/>
            <person name="Campbell R.D."/>
            <person name="Aguado B."/>
        </authorList>
    </citation>
    <scope>GLYCOSYLATION</scope>
    <scope>SUBUNIT</scope>
</reference>
<accession>Q5SRR4</accession>
<accession>A6NCW4</accession>
<accession>B0UXB3</accession>
<accession>B0UXB4</accession>
<accession>B0UZ69</accession>
<accession>B0UZQ0</accession>
<accession>B1B0L9</accession>
<accession>O95871</accession>
<accession>Q5SQ59</accession>
<accession>Q8NDY0</accession>
<accession>Q8NDY1</accession>
<gene>
    <name type="primary">LY6G5C</name>
    <name type="synonym">C6orf20</name>
    <name type="synonym">G5C</name>
    <name type="synonym">NG33</name>
</gene>
<evidence type="ECO:0000250" key="1"/>
<evidence type="ECO:0000255" key="2"/>
<evidence type="ECO:0000269" key="3">
    <source>
    </source>
</evidence>
<evidence type="ECO:0000269" key="4">
    <source>
    </source>
</evidence>
<evidence type="ECO:0000303" key="5">
    <source>
    </source>
</evidence>
<evidence type="ECO:0000305" key="6"/>
<protein>
    <recommendedName>
        <fullName>Lymphocyte antigen 6 complex locus protein G5c</fullName>
    </recommendedName>
</protein>
<keyword id="KW-0025">Alternative splicing</keyword>
<keyword id="KW-1015">Disulfide bond</keyword>
<keyword id="KW-0325">Glycoprotein</keyword>
<keyword id="KW-1185">Reference proteome</keyword>
<keyword id="KW-0964">Secreted</keyword>
<keyword id="KW-0732">Signal</keyword>
<organism>
    <name type="scientific">Homo sapiens</name>
    <name type="common">Human</name>
    <dbReference type="NCBI Taxonomy" id="9606"/>
    <lineage>
        <taxon>Eukaryota</taxon>
        <taxon>Metazoa</taxon>
        <taxon>Chordata</taxon>
        <taxon>Craniata</taxon>
        <taxon>Vertebrata</taxon>
        <taxon>Euteleostomi</taxon>
        <taxon>Mammalia</taxon>
        <taxon>Eutheria</taxon>
        <taxon>Euarchontoglires</taxon>
        <taxon>Primates</taxon>
        <taxon>Haplorrhini</taxon>
        <taxon>Catarrhini</taxon>
        <taxon>Hominidae</taxon>
        <taxon>Homo</taxon>
    </lineage>
</organism>
<feature type="signal peptide" evidence="2">
    <location>
        <begin position="1"/>
        <end position="41"/>
    </location>
</feature>
<feature type="chain" id="PRO_0000323016" description="Lymphocyte antigen 6 complex locus protein G5c">
    <location>
        <begin position="42"/>
        <end position="150"/>
    </location>
</feature>
<feature type="domain" description="UPAR/Ly6">
    <location>
        <begin position="60"/>
        <end position="150"/>
    </location>
</feature>
<feature type="glycosylation site" description="N-linked (GlcNAc...) asparagine" evidence="2">
    <location>
        <position position="96"/>
    </location>
</feature>
<feature type="disulfide bond" evidence="1">
    <location>
        <begin position="62"/>
        <end position="89"/>
    </location>
</feature>
<feature type="disulfide bond" evidence="1">
    <location>
        <begin position="65"/>
        <end position="74"/>
    </location>
</feature>
<feature type="disulfide bond" evidence="1">
    <location>
        <begin position="81"/>
        <end position="107"/>
    </location>
</feature>
<feature type="disulfide bond" evidence="1">
    <location>
        <begin position="134"/>
        <end position="139"/>
    </location>
</feature>
<feature type="splice variant" id="VSP_042107" description="In isoform 3." evidence="5">
    <original>MRFMAGPAGSQSLGPLCFHSSPQALYTVLLIVLVMMSLVF</original>
    <variation>MISRDADLPSCWGAGPCYTGHKVGALRRDTVICCCRHGDYSTPCLFTPGKPSRNPSPWKRTLWTLSAPWAGPAGWTGEEQNATKTGLITRRPRPLRRRPHPAPASPLPEIIRGNIPRML</variation>
    <location>
        <begin position="1"/>
        <end position="40"/>
    </location>
</feature>
<feature type="splice variant" id="VSP_032004" description="In isoform 2." evidence="6">
    <original>MRFMAGPAGSQSLGPLCFHSS</original>
    <variation>MQTFPVAGALDPAILDTSS</variation>
    <location>
        <begin position="1"/>
        <end position="21"/>
    </location>
</feature>
<dbReference type="EMBL" id="AJ315541">
    <property type="protein sequence ID" value="CAC85522.1"/>
    <property type="molecule type" value="mRNA"/>
</dbReference>
<dbReference type="EMBL" id="AJ315542">
    <property type="protein sequence ID" value="CAC85542.1"/>
    <property type="molecule type" value="mRNA"/>
</dbReference>
<dbReference type="EMBL" id="AF129756">
    <property type="protein sequence ID" value="AAD18080.1"/>
    <property type="molecule type" value="Genomic_DNA"/>
</dbReference>
<dbReference type="EMBL" id="BA000025">
    <property type="protein sequence ID" value="BAB63384.1"/>
    <property type="molecule type" value="Genomic_DNA"/>
</dbReference>
<dbReference type="EMBL" id="AL662899">
    <property type="status" value="NOT_ANNOTATED_CDS"/>
    <property type="molecule type" value="Genomic_DNA"/>
</dbReference>
<dbReference type="EMBL" id="AL670886">
    <property type="status" value="NOT_ANNOTATED_CDS"/>
    <property type="molecule type" value="Genomic_DNA"/>
</dbReference>
<dbReference type="EMBL" id="AL805934">
    <property type="status" value="NOT_ANNOTATED_CDS"/>
    <property type="molecule type" value="Genomic_DNA"/>
</dbReference>
<dbReference type="EMBL" id="BX511262">
    <property type="status" value="NOT_ANNOTATED_CDS"/>
    <property type="molecule type" value="Genomic_DNA"/>
</dbReference>
<dbReference type="EMBL" id="CR354443">
    <property type="status" value="NOT_ANNOTATED_CDS"/>
    <property type="molecule type" value="Genomic_DNA"/>
</dbReference>
<dbReference type="EMBL" id="CR753842">
    <property type="status" value="NOT_ANNOTATED_CDS"/>
    <property type="molecule type" value="Genomic_DNA"/>
</dbReference>
<dbReference type="EMBL" id="CR759761">
    <property type="status" value="NOT_ANNOTATED_CDS"/>
    <property type="molecule type" value="Genomic_DNA"/>
</dbReference>
<dbReference type="EMBL" id="CH471081">
    <property type="protein sequence ID" value="EAX03478.1"/>
    <property type="molecule type" value="Genomic_DNA"/>
</dbReference>
<dbReference type="CCDS" id="CCDS34401.2">
    <molecule id="Q5SRR4-1"/>
</dbReference>
<dbReference type="RefSeq" id="NP_079538.3">
    <molecule id="Q5SRR4-1"/>
    <property type="nucleotide sequence ID" value="NM_025262.4"/>
</dbReference>
<dbReference type="RefSeq" id="XP_054187160.1">
    <molecule id="Q5SRR4-1"/>
    <property type="nucleotide sequence ID" value="XM_054331185.1"/>
</dbReference>
<dbReference type="RefSeq" id="XP_054187402.1">
    <molecule id="Q5SRR4-1"/>
    <property type="nucleotide sequence ID" value="XM_054331427.1"/>
</dbReference>
<dbReference type="BioGRID" id="123285">
    <property type="interactions" value="295"/>
</dbReference>
<dbReference type="FunCoup" id="Q5SRR4">
    <property type="interactions" value="6"/>
</dbReference>
<dbReference type="IntAct" id="Q5SRR4">
    <property type="interactions" value="12"/>
</dbReference>
<dbReference type="STRING" id="9606.ENSP00000372724"/>
<dbReference type="GlyCosmos" id="Q5SRR4">
    <property type="glycosylation" value="1 site, No reported glycans"/>
</dbReference>
<dbReference type="GlyGen" id="Q5SRR4">
    <property type="glycosylation" value="1 site"/>
</dbReference>
<dbReference type="BioMuta" id="LY6G5C"/>
<dbReference type="DMDM" id="172045918"/>
<dbReference type="MassIVE" id="Q5SRR4"/>
<dbReference type="PaxDb" id="9606-ENSP00000372724"/>
<dbReference type="Antibodypedia" id="50054">
    <property type="antibodies" value="25 antibodies from 13 providers"/>
</dbReference>
<dbReference type="DNASU" id="80741"/>
<dbReference type="Ensembl" id="ENST00000324540.9">
    <molecule id="Q5SRR4-1"/>
    <property type="protein sequence ID" value="ENSP00000313380.5"/>
    <property type="gene ID" value="ENSG00000111971.14"/>
</dbReference>
<dbReference type="Ensembl" id="ENST00000383237.5">
    <molecule id="Q5SRR4-1"/>
    <property type="protein sequence ID" value="ENSP00000372724.4"/>
    <property type="gene ID" value="ENSG00000204428.12"/>
</dbReference>
<dbReference type="Ensembl" id="ENST00000383425.8">
    <molecule id="Q5SRR4-1"/>
    <property type="protein sequence ID" value="ENSP00000372917.4"/>
    <property type="gene ID" value="ENSG00000206404.11"/>
</dbReference>
<dbReference type="Ensembl" id="ENST00000418117.6">
    <molecule id="Q5SRR4-1"/>
    <property type="protein sequence ID" value="ENSP00000391301.2"/>
    <property type="gene ID" value="ENSG00000228883.9"/>
</dbReference>
<dbReference type="Ensembl" id="ENST00000431114.6">
    <molecule id="Q5SRR4-1"/>
    <property type="protein sequence ID" value="ENSP00000391878.2"/>
    <property type="gene ID" value="ENSG00000231325.9"/>
</dbReference>
<dbReference type="Ensembl" id="ENST00000455753.6">
    <molecule id="Q5SRR4-1"/>
    <property type="protein sequence ID" value="ENSP00000413765.2"/>
    <property type="gene ID" value="ENSG00000226404.9"/>
</dbReference>
<dbReference type="Ensembl" id="ENST00000458081.6">
    <molecule id="Q5SRR4-1"/>
    <property type="protein sequence ID" value="ENSP00000414953.2"/>
    <property type="gene ID" value="ENSG00000237495.9"/>
</dbReference>
<dbReference type="GeneID" id="80741"/>
<dbReference type="KEGG" id="hsa:80741"/>
<dbReference type="MANE-Select" id="ENST00000383237.5">
    <property type="protein sequence ID" value="ENSP00000372724.4"/>
    <property type="RefSeq nucleotide sequence ID" value="NM_025262.4"/>
    <property type="RefSeq protein sequence ID" value="NP_079538.3"/>
</dbReference>
<dbReference type="UCSC" id="uc003nvu.3">
    <molecule id="Q5SRR4-1"/>
    <property type="organism name" value="human"/>
</dbReference>
<dbReference type="AGR" id="HGNC:13932"/>
<dbReference type="CTD" id="80741"/>
<dbReference type="GeneCards" id="LY6G5C"/>
<dbReference type="HGNC" id="HGNC:13932">
    <property type="gene designation" value="LY6G5C"/>
</dbReference>
<dbReference type="HPA" id="ENSG00000204428">
    <property type="expression patterns" value="Tissue enhanced (brain)"/>
</dbReference>
<dbReference type="MIM" id="610434">
    <property type="type" value="gene"/>
</dbReference>
<dbReference type="neXtProt" id="NX_Q5SRR4"/>
<dbReference type="OpenTargets" id="ENSG00000204428"/>
<dbReference type="PharmGKB" id="PA37827"/>
<dbReference type="VEuPathDB" id="HostDB:ENSG00000204428"/>
<dbReference type="eggNOG" id="ENOG502TD7Y">
    <property type="taxonomic scope" value="Eukaryota"/>
</dbReference>
<dbReference type="GeneTree" id="ENSGT00390000011513"/>
<dbReference type="HOGENOM" id="CLU_148118_0_0_1"/>
<dbReference type="InParanoid" id="Q5SRR4"/>
<dbReference type="OMA" id="FLDFCNN"/>
<dbReference type="OrthoDB" id="9449163at2759"/>
<dbReference type="PAN-GO" id="Q5SRR4">
    <property type="GO annotations" value="1 GO annotation based on evolutionary models"/>
</dbReference>
<dbReference type="PhylomeDB" id="Q5SRR4"/>
<dbReference type="TreeFam" id="TF338717"/>
<dbReference type="PathwayCommons" id="Q5SRR4"/>
<dbReference type="BioGRID-ORCS" id="80741">
    <property type="hits" value="6 hits in 1137 CRISPR screens"/>
</dbReference>
<dbReference type="ChiTaRS" id="LY6G5C">
    <property type="organism name" value="human"/>
</dbReference>
<dbReference type="GenomeRNAi" id="80741"/>
<dbReference type="Pharos" id="Q5SRR4">
    <property type="development level" value="Tdark"/>
</dbReference>
<dbReference type="PRO" id="PR:Q5SRR4"/>
<dbReference type="Proteomes" id="UP000005640">
    <property type="component" value="Chromosome 6"/>
</dbReference>
<dbReference type="RNAct" id="Q5SRR4">
    <property type="molecule type" value="protein"/>
</dbReference>
<dbReference type="Bgee" id="ENSG00000204428">
    <property type="expression patterns" value="Expressed in right hemisphere of cerebellum and 99 other cell types or tissues"/>
</dbReference>
<dbReference type="ExpressionAtlas" id="Q5SRR4">
    <property type="expression patterns" value="baseline and differential"/>
</dbReference>
<dbReference type="GO" id="GO:0009897">
    <property type="term" value="C:external side of plasma membrane"/>
    <property type="evidence" value="ECO:0007669"/>
    <property type="project" value="Ensembl"/>
</dbReference>
<dbReference type="GO" id="GO:0005576">
    <property type="term" value="C:extracellular region"/>
    <property type="evidence" value="ECO:0007669"/>
    <property type="project" value="UniProtKB-SubCell"/>
</dbReference>
<dbReference type="GO" id="GO:0032991">
    <property type="term" value="C:protein-containing complex"/>
    <property type="evidence" value="ECO:0000314"/>
    <property type="project" value="UniProtKB"/>
</dbReference>
<dbReference type="GO" id="GO:0042802">
    <property type="term" value="F:identical protein binding"/>
    <property type="evidence" value="ECO:0000314"/>
    <property type="project" value="UniProtKB"/>
</dbReference>
<dbReference type="CDD" id="cd23545">
    <property type="entry name" value="TFP_LU_ECD_Ly6G5c"/>
    <property type="match status" value="1"/>
</dbReference>
<dbReference type="InterPro" id="IPR016054">
    <property type="entry name" value="LY6_UPA_recep-like"/>
</dbReference>
<dbReference type="InterPro" id="IPR026110">
    <property type="entry name" value="LY6G5C"/>
</dbReference>
<dbReference type="PANTHER" id="PTHR14909">
    <property type="entry name" value="LYMPHOCYTE ANTIGEN 6 COMPLEX LOCUS PROTEIN G5C"/>
    <property type="match status" value="1"/>
</dbReference>
<dbReference type="PANTHER" id="PTHR14909:SF6">
    <property type="entry name" value="LYMPHOCYTE ANTIGEN 6 COMPLEX LOCUS PROTEIN G5C"/>
    <property type="match status" value="1"/>
</dbReference>
<dbReference type="Pfam" id="PF00021">
    <property type="entry name" value="UPAR_LY6"/>
    <property type="match status" value="1"/>
</dbReference>
<sequence length="150" mass="16650">MRFMAGPAGSQSLGPLCFHSSPQALYTVLLIVLVMMSLVFGKFVPVNWEPPQPLPFPKYLRCYRCLLETKELGCLLGSDICLTPAGSSCITLHKKNSSGSDVMVSDCRSKEQMSDCSNTRTSPVSGFWIFSQYCFLDFCNDPQNRGLYTP</sequence>